<comment type="function">
    <text evidence="1">Catalyzes an oxidative deamination of predominantly hydrophobic and aromatic L-amino acids, thus producing hydrogen peroxide that may contribute to the diverse toxic effects of this enzyme. Exhibits diverse biological activities, such as hemorrhage, hemolysis, edema, apoptosis of vascular endothelial cells or tumor cell lines, antibacterial and antiparasitic activities, as well as regulation of platelet aggregation. Effects of snake L-amino oxidases on platelets are controversial, since they either induce aggregation or inhibit agonist-induced aggregation. These different effects are probably due to different experimental conditions.</text>
</comment>
<comment type="catalytic activity">
    <reaction evidence="2">
        <text>an L-alpha-amino acid + O2 + H2O = a 2-oxocarboxylate + H2O2 + NH4(+)</text>
        <dbReference type="Rhea" id="RHEA:13781"/>
        <dbReference type="ChEBI" id="CHEBI:15377"/>
        <dbReference type="ChEBI" id="CHEBI:15379"/>
        <dbReference type="ChEBI" id="CHEBI:16240"/>
        <dbReference type="ChEBI" id="CHEBI:28938"/>
        <dbReference type="ChEBI" id="CHEBI:35179"/>
        <dbReference type="ChEBI" id="CHEBI:59869"/>
        <dbReference type="EC" id="1.4.3.2"/>
    </reaction>
</comment>
<comment type="cofactor">
    <cofactor evidence="2">
        <name>FAD</name>
        <dbReference type="ChEBI" id="CHEBI:57692"/>
    </cofactor>
</comment>
<comment type="subunit">
    <text evidence="2">Homodimer; non-covalently linked.</text>
</comment>
<comment type="subcellular location">
    <subcellularLocation>
        <location evidence="5">Secreted</location>
    </subcellularLocation>
</comment>
<comment type="tissue specificity">
    <text evidence="5">Expressed by the venom gland.</text>
</comment>
<comment type="PTM">
    <text evidence="2">Contains 2 disulfide bonds.</text>
</comment>
<comment type="PTM">
    <text evidence="2">N-glycosylated.</text>
</comment>
<comment type="similarity">
    <text evidence="4">Belongs to the flavin monoamine oxidase family. FIG1 subfamily.</text>
</comment>
<evidence type="ECO:0000250" key="1">
    <source>
        <dbReference type="UniProtKB" id="P0CC17"/>
    </source>
</evidence>
<evidence type="ECO:0000250" key="2">
    <source>
        <dbReference type="UniProtKB" id="P81382"/>
    </source>
</evidence>
<evidence type="ECO:0000303" key="3">
    <source>
    </source>
</evidence>
<evidence type="ECO:0000305" key="4"/>
<evidence type="ECO:0000305" key="5">
    <source>
    </source>
</evidence>
<protein>
    <recommendedName>
        <fullName>L-amino-acid oxidase</fullName>
        <shortName>LAAO</shortName>
        <shortName evidence="3">LAO</shortName>
        <ecNumber evidence="2">1.4.3.2</ecNumber>
    </recommendedName>
</protein>
<accession>Q6T627</accession>
<name>OXLA_BITGA</name>
<feature type="chain" id="PRO_0000315371" description="L-amino-acid oxidase">
    <location>
        <begin position="1" status="less than"/>
        <end position="60" status="greater than"/>
    </location>
</feature>
<feature type="binding site" evidence="2">
    <location>
        <begin position="1"/>
        <end position="4"/>
    </location>
    <ligand>
        <name>FAD</name>
        <dbReference type="ChEBI" id="CHEBI:57692"/>
    </ligand>
</feature>
<feature type="binding site" evidence="2">
    <location>
        <position position="4"/>
    </location>
    <ligand>
        <name>substrate</name>
    </ligand>
</feature>
<feature type="non-terminal residue" evidence="3">
    <location>
        <position position="1"/>
    </location>
</feature>
<feature type="non-terminal residue" evidence="3">
    <location>
        <position position="60"/>
    </location>
</feature>
<sequence length="60" mass="7323">GPMRIPEKHRIVREYIRKFGLQLNEFVQETENAWYYIKNIRKKVHEVKKDPGLLKYPVKP</sequence>
<reference key="1">
    <citation type="journal article" date="2004" name="Gene">
        <title>Bitis gabonica (Gaboon viper) snake venom gland: toward a catalog for the full-length transcripts (cDNA) and proteins.</title>
        <authorList>
            <person name="Francischetti I.M.B."/>
            <person name="My-Pham V."/>
            <person name="Harrison J."/>
            <person name="Garfield M.K."/>
            <person name="Ribeiro J.M.C."/>
        </authorList>
    </citation>
    <scope>NUCLEOTIDE SEQUENCE [LARGE SCALE MRNA]</scope>
    <source>
        <tissue>Venom gland</tissue>
    </source>
</reference>
<proteinExistence type="evidence at transcript level"/>
<dbReference type="EC" id="1.4.3.2" evidence="2"/>
<dbReference type="EMBL" id="AY434453">
    <property type="protein sequence ID" value="AAR07363.1"/>
    <property type="molecule type" value="mRNA"/>
</dbReference>
<dbReference type="SMR" id="Q6T627"/>
<dbReference type="GO" id="GO:0005576">
    <property type="term" value="C:extracellular region"/>
    <property type="evidence" value="ECO:0007669"/>
    <property type="project" value="UniProtKB-SubCell"/>
</dbReference>
<dbReference type="GO" id="GO:0001716">
    <property type="term" value="F:L-amino-acid oxidase activity"/>
    <property type="evidence" value="ECO:0007669"/>
    <property type="project" value="UniProtKB-EC"/>
</dbReference>
<dbReference type="GO" id="GO:0090729">
    <property type="term" value="F:toxin activity"/>
    <property type="evidence" value="ECO:0007669"/>
    <property type="project" value="UniProtKB-KW"/>
</dbReference>
<dbReference type="GO" id="GO:0006915">
    <property type="term" value="P:apoptotic process"/>
    <property type="evidence" value="ECO:0007669"/>
    <property type="project" value="UniProtKB-KW"/>
</dbReference>
<dbReference type="GO" id="GO:0042742">
    <property type="term" value="P:defense response to bacterium"/>
    <property type="evidence" value="ECO:0007669"/>
    <property type="project" value="UniProtKB-KW"/>
</dbReference>
<dbReference type="GO" id="GO:0031640">
    <property type="term" value="P:killing of cells of another organism"/>
    <property type="evidence" value="ECO:0007669"/>
    <property type="project" value="UniProtKB-KW"/>
</dbReference>
<dbReference type="Gene3D" id="3.90.660.10">
    <property type="match status" value="1"/>
</dbReference>
<keyword id="KW-0044">Antibiotic</keyword>
<keyword id="KW-0929">Antimicrobial</keyword>
<keyword id="KW-0053">Apoptosis</keyword>
<keyword id="KW-0204">Cytolysis</keyword>
<keyword id="KW-1015">Disulfide bond</keyword>
<keyword id="KW-0274">FAD</keyword>
<keyword id="KW-0285">Flavoprotein</keyword>
<keyword id="KW-0325">Glycoprotein</keyword>
<keyword id="KW-0354">Hemolysis</keyword>
<keyword id="KW-1199">Hemostasis impairing toxin</keyword>
<keyword id="KW-0560">Oxidoreductase</keyword>
<keyword id="KW-0964">Secreted</keyword>
<keyword id="KW-0800">Toxin</keyword>
<organism>
    <name type="scientific">Bitis gabonica</name>
    <name type="common">Gaboon adder</name>
    <name type="synonym">Gaboon viper</name>
    <dbReference type="NCBI Taxonomy" id="8694"/>
    <lineage>
        <taxon>Eukaryota</taxon>
        <taxon>Metazoa</taxon>
        <taxon>Chordata</taxon>
        <taxon>Craniata</taxon>
        <taxon>Vertebrata</taxon>
        <taxon>Euteleostomi</taxon>
        <taxon>Lepidosauria</taxon>
        <taxon>Squamata</taxon>
        <taxon>Bifurcata</taxon>
        <taxon>Unidentata</taxon>
        <taxon>Episquamata</taxon>
        <taxon>Toxicofera</taxon>
        <taxon>Serpentes</taxon>
        <taxon>Colubroidea</taxon>
        <taxon>Viperidae</taxon>
        <taxon>Viperinae</taxon>
        <taxon>Bitis</taxon>
    </lineage>
</organism>